<protein>
    <recommendedName>
        <fullName evidence="1">Ribosomal RNA small subunit methyltransferase C</fullName>
        <ecNumber evidence="1">2.1.1.172</ecNumber>
    </recommendedName>
    <alternativeName>
        <fullName evidence="1">16S rRNA m2G1207 methyltransferase</fullName>
    </alternativeName>
    <alternativeName>
        <fullName evidence="1">rRNA (guanine-N(2)-)-methyltransferase RsmC</fullName>
    </alternativeName>
</protein>
<evidence type="ECO:0000255" key="1">
    <source>
        <dbReference type="HAMAP-Rule" id="MF_01862"/>
    </source>
</evidence>
<accession>Q1IEU2</accession>
<dbReference type="EC" id="2.1.1.172" evidence="1"/>
<dbReference type="EMBL" id="CT573326">
    <property type="protein sequence ID" value="CAK13813.1"/>
    <property type="molecule type" value="Genomic_DNA"/>
</dbReference>
<dbReference type="RefSeq" id="WP_011532239.1">
    <property type="nucleotide sequence ID" value="NC_008027.1"/>
</dbReference>
<dbReference type="SMR" id="Q1IEU2"/>
<dbReference type="STRING" id="384676.PSEEN0906"/>
<dbReference type="GeneID" id="32804206"/>
<dbReference type="KEGG" id="pen:PSEEN0906"/>
<dbReference type="eggNOG" id="COG2813">
    <property type="taxonomic scope" value="Bacteria"/>
</dbReference>
<dbReference type="HOGENOM" id="CLU_049581_0_0_6"/>
<dbReference type="OrthoDB" id="9816072at2"/>
<dbReference type="Proteomes" id="UP000000658">
    <property type="component" value="Chromosome"/>
</dbReference>
<dbReference type="GO" id="GO:0005737">
    <property type="term" value="C:cytoplasm"/>
    <property type="evidence" value="ECO:0007669"/>
    <property type="project" value="UniProtKB-SubCell"/>
</dbReference>
<dbReference type="GO" id="GO:0052914">
    <property type="term" value="F:16S rRNA (guanine(1207)-N(2))-methyltransferase activity"/>
    <property type="evidence" value="ECO:0007669"/>
    <property type="project" value="UniProtKB-EC"/>
</dbReference>
<dbReference type="GO" id="GO:0003676">
    <property type="term" value="F:nucleic acid binding"/>
    <property type="evidence" value="ECO:0007669"/>
    <property type="project" value="InterPro"/>
</dbReference>
<dbReference type="CDD" id="cd02440">
    <property type="entry name" value="AdoMet_MTases"/>
    <property type="match status" value="1"/>
</dbReference>
<dbReference type="Gene3D" id="3.40.50.150">
    <property type="entry name" value="Vaccinia Virus protein VP39"/>
    <property type="match status" value="2"/>
</dbReference>
<dbReference type="HAMAP" id="MF_01862">
    <property type="entry name" value="16SrRNA_methyltr_C"/>
    <property type="match status" value="1"/>
</dbReference>
<dbReference type="InterPro" id="IPR002052">
    <property type="entry name" value="DNA_methylase_N6_adenine_CS"/>
</dbReference>
<dbReference type="InterPro" id="IPR013675">
    <property type="entry name" value="Mtase_sm_N"/>
</dbReference>
<dbReference type="InterPro" id="IPR023543">
    <property type="entry name" value="rRNA_ssu_MeTfrase_C"/>
</dbReference>
<dbReference type="InterPro" id="IPR046977">
    <property type="entry name" value="RsmC/RlmG"/>
</dbReference>
<dbReference type="InterPro" id="IPR029063">
    <property type="entry name" value="SAM-dependent_MTases_sf"/>
</dbReference>
<dbReference type="InterPro" id="IPR007848">
    <property type="entry name" value="Small_mtfrase_dom"/>
</dbReference>
<dbReference type="PANTHER" id="PTHR47816">
    <property type="entry name" value="RIBOSOMAL RNA SMALL SUBUNIT METHYLTRANSFERASE C"/>
    <property type="match status" value="1"/>
</dbReference>
<dbReference type="PANTHER" id="PTHR47816:SF4">
    <property type="entry name" value="RIBOSOMAL RNA SMALL SUBUNIT METHYLTRANSFERASE C"/>
    <property type="match status" value="1"/>
</dbReference>
<dbReference type="Pfam" id="PF05175">
    <property type="entry name" value="MTS"/>
    <property type="match status" value="1"/>
</dbReference>
<dbReference type="Pfam" id="PF08468">
    <property type="entry name" value="MTS_N"/>
    <property type="match status" value="1"/>
</dbReference>
<dbReference type="SUPFAM" id="SSF53335">
    <property type="entry name" value="S-adenosyl-L-methionine-dependent methyltransferases"/>
    <property type="match status" value="1"/>
</dbReference>
<reference key="1">
    <citation type="journal article" date="2006" name="Nat. Biotechnol.">
        <title>Complete genome sequence of the entomopathogenic and metabolically versatile soil bacterium Pseudomonas entomophila.</title>
        <authorList>
            <person name="Vodovar N."/>
            <person name="Vallenet D."/>
            <person name="Cruveiller S."/>
            <person name="Rouy Z."/>
            <person name="Barbe V."/>
            <person name="Acosta C."/>
            <person name="Cattolico L."/>
            <person name="Jubin C."/>
            <person name="Lajus A."/>
            <person name="Segurens B."/>
            <person name="Vacherie B."/>
            <person name="Wincker P."/>
            <person name="Weissenbach J."/>
            <person name="Lemaitre B."/>
            <person name="Medigue C."/>
            <person name="Boccard F."/>
        </authorList>
    </citation>
    <scope>NUCLEOTIDE SEQUENCE [LARGE SCALE GENOMIC DNA]</scope>
    <source>
        <strain>L48</strain>
    </source>
</reference>
<keyword id="KW-0963">Cytoplasm</keyword>
<keyword id="KW-0489">Methyltransferase</keyword>
<keyword id="KW-0698">rRNA processing</keyword>
<keyword id="KW-0949">S-adenosyl-L-methionine</keyword>
<keyword id="KW-0808">Transferase</keyword>
<proteinExistence type="inferred from homology"/>
<comment type="function">
    <text evidence="1">Specifically methylates the guanine in position 1207 of 16S rRNA in the 30S particle.</text>
</comment>
<comment type="catalytic activity">
    <reaction evidence="1">
        <text>guanosine(1207) in 16S rRNA + S-adenosyl-L-methionine = N(2)-methylguanosine(1207) in 16S rRNA + S-adenosyl-L-homocysteine + H(+)</text>
        <dbReference type="Rhea" id="RHEA:42736"/>
        <dbReference type="Rhea" id="RHEA-COMP:10213"/>
        <dbReference type="Rhea" id="RHEA-COMP:10214"/>
        <dbReference type="ChEBI" id="CHEBI:15378"/>
        <dbReference type="ChEBI" id="CHEBI:57856"/>
        <dbReference type="ChEBI" id="CHEBI:59789"/>
        <dbReference type="ChEBI" id="CHEBI:74269"/>
        <dbReference type="ChEBI" id="CHEBI:74481"/>
        <dbReference type="EC" id="2.1.1.172"/>
    </reaction>
</comment>
<comment type="subunit">
    <text evidence="1">Monomer.</text>
</comment>
<comment type="subcellular location">
    <subcellularLocation>
        <location evidence="1">Cytoplasm</location>
    </subcellularLocation>
</comment>
<comment type="similarity">
    <text evidence="1">Belongs to the methyltransferase superfamily. RsmC family.</text>
</comment>
<feature type="chain" id="PRO_0000369738" description="Ribosomal RNA small subunit methyltransferase C">
    <location>
        <begin position="1"/>
        <end position="332"/>
    </location>
</feature>
<organism>
    <name type="scientific">Pseudomonas entomophila (strain L48)</name>
    <dbReference type="NCBI Taxonomy" id="384676"/>
    <lineage>
        <taxon>Bacteria</taxon>
        <taxon>Pseudomonadati</taxon>
        <taxon>Pseudomonadota</taxon>
        <taxon>Gammaproteobacteria</taxon>
        <taxon>Pseudomonadales</taxon>
        <taxon>Pseudomonadaceae</taxon>
        <taxon>Pseudomonas</taxon>
    </lineage>
</organism>
<name>RSMC_PSEE4</name>
<sequence length="332" mass="35682">MDPRSEVMLRQAELFQGPLLIAGAPADGLLGQLPKAHGWTWHAGDQALLESRFGNRCHHGVGVPEVAFDAAILFLPKSRELAAYLLNALAARLAGRELYLVGEKRGGIEGAAKQLQAFGKPRKLDSARHCQLWQVTVDHAPEAKPLESLAERFELPLEDGPLQVVSLPGVFSHGRLDKGTALLLEHLDGLPSGHVLDFGCGAGVLGATIKRRYPQSQVTLLDVDAFAVAASRLTLAANGLEGQVISGDGIDAAPGELDLILSNPPFHTGVHTDYQASENLLKKSGEHLRKGGEIRLVANSFLRYQPLIEGALGNCEIRAEAQGFRIYRATRG</sequence>
<gene>
    <name evidence="1" type="primary">rsmC</name>
    <name type="ordered locus">PSEEN0906</name>
</gene>